<name>P15A_RABIT</name>
<reference key="1">
    <citation type="journal article" date="1993" name="J. Biol. Chem.">
        <title>Antibacterial 15-kDa protein isoforms (p15s) are members of a novel family of leukocyte proteins.</title>
        <authorList>
            <person name="Levy O."/>
            <person name="Weiss J."/>
            <person name="Zarember K."/>
            <person name="Ooi C.E."/>
            <person name="Elsbach P."/>
        </authorList>
    </citation>
    <scope>NUCLEOTIDE SEQUENCE [MRNA]</scope>
    <source>
        <strain>New Zealand white</strain>
        <tissue>Bone marrow</tissue>
    </source>
</reference>
<reference key="2">
    <citation type="journal article" date="1993" name="Agents Actions">
        <title>Structural characterization of BPI-modulating 15 kDa proteins from rabbit polymorphonuclear leukocytes: identification of a novel family of leukocyte proteins.</title>
        <authorList>
            <person name="Levy O."/>
            <person name="Weiss J."/>
            <person name="Ooi C.E."/>
            <person name="Elsbach P."/>
        </authorList>
    </citation>
    <scope>NUCLEOTIDE SEQUENCE [MRNA]</scope>
</reference>
<reference key="3">
    <citation type="journal article" date="1990" name="J. Biol. Chem.">
        <title>Isolation of two isoforms of a novel 15-kDa protein from rabbit polymorphonuclear leukocytes that modulate the antibacterial actions of other leukocyte proteins.</title>
        <authorList>
            <person name="Ooi C.E."/>
            <person name="Weiss J."/>
            <person name="Levy O."/>
            <person name="Elsbach P."/>
        </authorList>
    </citation>
    <scope>PROTEIN SEQUENCE OF 21-40</scope>
    <source>
        <tissue>Neutrophil</tissue>
    </source>
</reference>
<sequence length="137" mass="15675">MAGVWKVLVVLVGLAVVACAIPRRRLRYEEVVAQALQFYNEGQQGQPLFRLLEATPPPSLNSKSRIPLNFRIKETVCIFTLDRQPGNCAFREGGEERICRGAFVRRRWVRALTLRCDRDQRRQPEFPRVTRPAGPTA</sequence>
<keyword id="KW-0044">Antibiotic</keyword>
<keyword id="KW-0929">Antimicrobial</keyword>
<keyword id="KW-0903">Direct protein sequencing</keyword>
<keyword id="KW-1015">Disulfide bond</keyword>
<keyword id="KW-1185">Reference proteome</keyword>
<keyword id="KW-0964">Secreted</keyword>
<keyword id="KW-0732">Signal</keyword>
<comment type="function">
    <text>Binds to bacterial lipopolysaccharides (LPS), potentiates strongly the early antibacterial effects of BPI. Inhibits the late lethal action of BPI.</text>
</comment>
<comment type="subcellular location">
    <subcellularLocation>
        <location>Secreted</location>
    </subcellularLocation>
</comment>
<comment type="tissue specificity">
    <text>Large granules of neutrophils.</text>
</comment>
<comment type="similarity">
    <text evidence="3">Belongs to the cathelicidin family.</text>
</comment>
<proteinExistence type="evidence at protein level"/>
<evidence type="ECO:0000250" key="1"/>
<evidence type="ECO:0000269" key="2">
    <source>
    </source>
</evidence>
<evidence type="ECO:0000305" key="3"/>
<protein>
    <recommendedName>
        <fullName>15 kDa protein A</fullName>
    </recommendedName>
    <alternativeName>
        <fullName>P15R</fullName>
    </alternativeName>
    <alternativeName>
        <fullName>Protein P15A</fullName>
    </alternativeName>
</protein>
<feature type="signal peptide" evidence="2">
    <location>
        <begin position="1"/>
        <end position="20"/>
    </location>
</feature>
<feature type="chain" id="PRO_0000004756" description="15 kDa protein A">
    <location>
        <begin position="21"/>
        <end position="137"/>
    </location>
</feature>
<feature type="disulfide bond" evidence="1">
    <location>
        <begin position="77"/>
        <end position="88"/>
    </location>
</feature>
<feature type="disulfide bond" evidence="1">
    <location>
        <begin position="99"/>
        <end position="116"/>
    </location>
</feature>
<feature type="sequence conflict" description="In Ref. 3; AA sequence." evidence="3" ref="3">
    <location>
        <position position="25"/>
    </location>
</feature>
<feature type="sequence conflict" description="In Ref. 3; AA sequence." evidence="3" ref="3">
    <original>Y</original>
    <variation>E</variation>
    <location>
        <position position="39"/>
    </location>
</feature>
<organism>
    <name type="scientific">Oryctolagus cuniculus</name>
    <name type="common">Rabbit</name>
    <dbReference type="NCBI Taxonomy" id="9986"/>
    <lineage>
        <taxon>Eukaryota</taxon>
        <taxon>Metazoa</taxon>
        <taxon>Chordata</taxon>
        <taxon>Craniata</taxon>
        <taxon>Vertebrata</taxon>
        <taxon>Euteleostomi</taxon>
        <taxon>Mammalia</taxon>
        <taxon>Eutheria</taxon>
        <taxon>Euarchontoglires</taxon>
        <taxon>Glires</taxon>
        <taxon>Lagomorpha</taxon>
        <taxon>Leporidae</taxon>
        <taxon>Oryctolagus</taxon>
    </lineage>
</organism>
<dbReference type="EMBL" id="L07588">
    <property type="protein sequence ID" value="AAA99904.1"/>
    <property type="molecule type" value="mRNA"/>
</dbReference>
<dbReference type="EMBL" id="S68154">
    <property type="protein sequence ID" value="AAB29403.1"/>
    <property type="molecule type" value="mRNA"/>
</dbReference>
<dbReference type="PIR" id="A46634">
    <property type="entry name" value="A46634"/>
</dbReference>
<dbReference type="RefSeq" id="NP_001075794.1">
    <property type="nucleotide sequence ID" value="NM_001082325.2"/>
</dbReference>
<dbReference type="SMR" id="P26202"/>
<dbReference type="FunCoup" id="P26202">
    <property type="interactions" value="3"/>
</dbReference>
<dbReference type="STRING" id="9986.ENSOCUP00000015669"/>
<dbReference type="PaxDb" id="9986-ENSOCUP00000015669"/>
<dbReference type="Ensembl" id="ENSOCUT00000026191.3">
    <property type="protein sequence ID" value="ENSOCUP00000015669.1"/>
    <property type="gene ID" value="ENSOCUG00000025236.3"/>
</dbReference>
<dbReference type="GeneID" id="100009166"/>
<dbReference type="KEGG" id="ocu:100009166"/>
<dbReference type="eggNOG" id="ENOG502SU6N">
    <property type="taxonomic scope" value="Eukaryota"/>
</dbReference>
<dbReference type="GeneTree" id="ENSGT00730000111701"/>
<dbReference type="HOGENOM" id="CLU_121724_1_0_1"/>
<dbReference type="InParanoid" id="P26202"/>
<dbReference type="OMA" id="PQDCAFR"/>
<dbReference type="OrthoDB" id="9835709at2759"/>
<dbReference type="TreeFam" id="TF338457"/>
<dbReference type="Proteomes" id="UP000001811">
    <property type="component" value="Chromosome 9"/>
</dbReference>
<dbReference type="Bgee" id="ENSOCUG00000025236">
    <property type="expression patterns" value="Expressed in blood and 17 other cell types or tissues"/>
</dbReference>
<dbReference type="GO" id="GO:0005615">
    <property type="term" value="C:extracellular space"/>
    <property type="evidence" value="ECO:0007669"/>
    <property type="project" value="TreeGrafter"/>
</dbReference>
<dbReference type="GO" id="GO:0004869">
    <property type="term" value="F:cysteine-type endopeptidase inhibitor activity"/>
    <property type="evidence" value="ECO:0007669"/>
    <property type="project" value="InterPro"/>
</dbReference>
<dbReference type="GO" id="GO:0042742">
    <property type="term" value="P:defense response to bacterium"/>
    <property type="evidence" value="ECO:0007669"/>
    <property type="project" value="UniProtKB-KW"/>
</dbReference>
<dbReference type="FunFam" id="3.10.450.10:FF:000003">
    <property type="entry name" value="Cathelicidin antimicrobial peptide"/>
    <property type="match status" value="1"/>
</dbReference>
<dbReference type="Gene3D" id="3.10.450.10">
    <property type="match status" value="1"/>
</dbReference>
<dbReference type="InterPro" id="IPR001894">
    <property type="entry name" value="Cathelicidin-like"/>
</dbReference>
<dbReference type="InterPro" id="IPR018216">
    <property type="entry name" value="Cathelicidin_CS"/>
</dbReference>
<dbReference type="InterPro" id="IPR000010">
    <property type="entry name" value="Cystatin_dom"/>
</dbReference>
<dbReference type="InterPro" id="IPR046350">
    <property type="entry name" value="Cystatin_sf"/>
</dbReference>
<dbReference type="PANTHER" id="PTHR10206">
    <property type="entry name" value="CATHELICIDIN"/>
    <property type="match status" value="1"/>
</dbReference>
<dbReference type="PANTHER" id="PTHR10206:SF4">
    <property type="entry name" value="NEUTROPHILIC GRANULE PROTEIN"/>
    <property type="match status" value="1"/>
</dbReference>
<dbReference type="Pfam" id="PF00666">
    <property type="entry name" value="Cathelicidins"/>
    <property type="match status" value="1"/>
</dbReference>
<dbReference type="SMART" id="SM00043">
    <property type="entry name" value="CY"/>
    <property type="match status" value="1"/>
</dbReference>
<dbReference type="SUPFAM" id="SSF54403">
    <property type="entry name" value="Cystatin/monellin"/>
    <property type="match status" value="1"/>
</dbReference>
<dbReference type="PROSITE" id="PS00946">
    <property type="entry name" value="CATHELICIDINS_1"/>
    <property type="match status" value="1"/>
</dbReference>
<dbReference type="PROSITE" id="PS00947">
    <property type="entry name" value="CATHELICIDINS_2"/>
    <property type="match status" value="1"/>
</dbReference>
<accession>P26202</accession>